<protein>
    <recommendedName>
        <fullName>Early E3B 10.4 kDa protein</fullName>
    </recommendedName>
</protein>
<organismHost>
    <name type="scientific">Homo sapiens</name>
    <name type="common">Human</name>
    <dbReference type="NCBI Taxonomy" id="9606"/>
</organismHost>
<sequence>MIPRVFILLTLVALFCACSTLAAVSHIEVDCIPAFTVYLLYGFVTLTLICSLITVVIAFIQCIDWVCVRFAYLRHHPQYRDRTIAELLRIL</sequence>
<feature type="signal peptide" evidence="1">
    <location>
        <begin position="1"/>
        <end position="22"/>
    </location>
</feature>
<feature type="chain" id="PRO_0000036473" description="Early E3B 10.4 kDa protein">
    <location>
        <begin position="23"/>
        <end position="91"/>
    </location>
</feature>
<feature type="topological domain" description="Lumenal" evidence="2">
    <location>
        <begin position="23"/>
        <end position="34"/>
    </location>
</feature>
<feature type="transmembrane region" description="Helical" evidence="2">
    <location>
        <begin position="35"/>
        <end position="60"/>
    </location>
</feature>
<feature type="topological domain" description="Cytoplasmic" evidence="2">
    <location>
        <begin position="61"/>
        <end position="91"/>
    </location>
</feature>
<name>E310_ADE05</name>
<organism>
    <name type="scientific">Human adenovirus C serotype 5</name>
    <name type="common">HAdV-5</name>
    <name type="synonym">Human adenovirus 5</name>
    <dbReference type="NCBI Taxonomy" id="28285"/>
    <lineage>
        <taxon>Viruses</taxon>
        <taxon>Varidnaviria</taxon>
        <taxon>Bamfordvirae</taxon>
        <taxon>Preplasmiviricota</taxon>
        <taxon>Tectiliviricetes</taxon>
        <taxon>Rowavirales</taxon>
        <taxon>Adenoviridae</taxon>
        <taxon>Mastadenovirus</taxon>
        <taxon>Human mastadenovirus C</taxon>
    </lineage>
</organism>
<reference key="1">
    <citation type="journal article" date="1985" name="Virology">
        <title>DNA sequence of the early E3 transcription unit of adenovirus 5.</title>
        <authorList>
            <person name="Cladaras C."/>
            <person name="Wold W.S.M."/>
        </authorList>
    </citation>
    <scope>NUCLEOTIDE SEQUENCE [GENOMIC DNA]</scope>
</reference>
<reference key="2">
    <citation type="journal article" date="1992" name="Virology">
        <title>The sequence of the genome of adenovirus type 5 and its comparison with the genome of adenovirus type 2.</title>
        <authorList>
            <person name="Chroboczek J."/>
            <person name="Bieber F."/>
            <person name="Jacrot B."/>
        </authorList>
    </citation>
    <scope>NUCLEOTIDE SEQUENCE [LARGE SCALE GENOMIC DNA]</scope>
</reference>
<comment type="function">
    <text>Down-regulates the EGF receptor.</text>
</comment>
<comment type="subcellular location">
    <subcellularLocation>
        <location evidence="3">Host endoplasmic reticulum membrane</location>
        <topology evidence="3">Single-pass type I membrane protein</topology>
    </subcellularLocation>
</comment>
<comment type="similarity">
    <text evidence="3">Belongs to the adenoviridae E3B family.</text>
</comment>
<keyword id="KW-0244">Early protein</keyword>
<keyword id="KW-1038">Host endoplasmic reticulum</keyword>
<keyword id="KW-1043">Host membrane</keyword>
<keyword id="KW-0472">Membrane</keyword>
<keyword id="KW-1185">Reference proteome</keyword>
<keyword id="KW-0732">Signal</keyword>
<keyword id="KW-0812">Transmembrane</keyword>
<keyword id="KW-1133">Transmembrane helix</keyword>
<proteinExistence type="inferred from homology"/>
<dbReference type="EMBL" id="M73260">
    <property type="status" value="NOT_ANNOTATED_CDS"/>
    <property type="molecule type" value="Genomic_DNA"/>
</dbReference>
<dbReference type="EMBL" id="X03002">
    <property type="protein sequence ID" value="CAA26785.1"/>
    <property type="molecule type" value="Genomic_DNA"/>
</dbReference>
<dbReference type="RefSeq" id="AP_000222.1">
    <property type="nucleotide sequence ID" value="AC_000008.1"/>
</dbReference>
<dbReference type="SMR" id="P06497"/>
<dbReference type="Proteomes" id="UP000004992">
    <property type="component" value="Genome"/>
</dbReference>
<dbReference type="GO" id="GO:0044167">
    <property type="term" value="C:host cell endoplasmic reticulum membrane"/>
    <property type="evidence" value="ECO:0007669"/>
    <property type="project" value="UniProtKB-SubCell"/>
</dbReference>
<dbReference type="GO" id="GO:0016020">
    <property type="term" value="C:membrane"/>
    <property type="evidence" value="ECO:0007669"/>
    <property type="project" value="UniProtKB-KW"/>
</dbReference>
<dbReference type="InterPro" id="IPR005041">
    <property type="entry name" value="Adeno_E3B"/>
</dbReference>
<dbReference type="Pfam" id="PF03376">
    <property type="entry name" value="Adeno_E3B"/>
    <property type="match status" value="1"/>
</dbReference>
<evidence type="ECO:0000250" key="1"/>
<evidence type="ECO:0000255" key="2"/>
<evidence type="ECO:0000305" key="3"/>
<accession>P06497</accession>